<gene>
    <name type="primary">Ptpn9</name>
</gene>
<keyword id="KW-0007">Acetylation</keyword>
<keyword id="KW-0963">Cytoplasm</keyword>
<keyword id="KW-0378">Hydrolase</keyword>
<keyword id="KW-0904">Protein phosphatase</keyword>
<keyword id="KW-1185">Reference proteome</keyword>
<protein>
    <recommendedName>
        <fullName>Tyrosine-protein phosphatase non-receptor type 9</fullName>
        <ecNumber>3.1.3.48</ecNumber>
    </recommendedName>
    <alternativeName>
        <fullName>Protein-tyrosine phosphatase MEG2</fullName>
        <shortName>PTPase MEG2</shortName>
    </alternativeName>
</protein>
<name>PTN9_MOUSE</name>
<proteinExistence type="evidence at protein level"/>
<feature type="chain" id="PRO_0000094765" description="Tyrosine-protein phosphatase non-receptor type 9">
    <location>
        <begin position="1"/>
        <end position="593"/>
    </location>
</feature>
<feature type="domain" description="CRAL-TRIO" evidence="3">
    <location>
        <begin position="84"/>
        <end position="243"/>
    </location>
</feature>
<feature type="domain" description="Tyrosine-protein phosphatase" evidence="4">
    <location>
        <begin position="303"/>
        <end position="574"/>
    </location>
</feature>
<feature type="region of interest" description="Disordered" evidence="6">
    <location>
        <begin position="1"/>
        <end position="20"/>
    </location>
</feature>
<feature type="active site" description="Phosphocysteine intermediate" evidence="4 5">
    <location>
        <position position="515"/>
    </location>
</feature>
<feature type="modified residue" description="N-acetylmethionine" evidence="2">
    <location>
        <position position="1"/>
    </location>
</feature>
<feature type="sequence conflict" description="In Ref. 1; AAB66898." evidence="7" ref="1">
    <original>G</original>
    <variation>R</variation>
    <location>
        <position position="190"/>
    </location>
</feature>
<feature type="sequence conflict" description="In Ref. 1; AAB66898." evidence="7" ref="1">
    <original>Q</original>
    <variation>P</variation>
    <location>
        <position position="215"/>
    </location>
</feature>
<feature type="sequence conflict" description="In Ref. 1; AAB66898." evidence="7" ref="1">
    <original>K</original>
    <variation>T</variation>
    <location>
        <position position="218"/>
    </location>
</feature>
<feature type="sequence conflict" description="In Ref. 1; AAB66898." evidence="7" ref="1">
    <original>E</original>
    <variation>K</variation>
    <location>
        <position position="233"/>
    </location>
</feature>
<feature type="sequence conflict" description="In Ref. 1; AAB66898." evidence="7" ref="1">
    <original>SV</original>
    <variation>TL</variation>
    <location>
        <begin position="277"/>
        <end position="278"/>
    </location>
</feature>
<feature type="sequence conflict" description="In Ref. 1; AAB66898." evidence="7" ref="1">
    <original>GPHA</original>
    <variation>SPLS</variation>
    <location>
        <begin position="282"/>
        <end position="285"/>
    </location>
</feature>
<feature type="sequence conflict" description="In Ref. 1; AAB66898." evidence="7" ref="1">
    <original>RR</original>
    <variation>CL</variation>
    <location>
        <begin position="311"/>
        <end position="312"/>
    </location>
</feature>
<feature type="sequence conflict" description="In Ref. 1; AAB66898." evidence="7" ref="1">
    <original>CS</original>
    <variation>RT</variation>
    <location>
        <begin position="321"/>
        <end position="322"/>
    </location>
</feature>
<feature type="sequence conflict" description="In Ref. 1; AAB66898." evidence="7" ref="1">
    <original>G</original>
    <variation>R</variation>
    <location>
        <position position="326"/>
    </location>
</feature>
<feature type="sequence conflict" description="In Ref. 1; AAB66898." evidence="7" ref="1">
    <original>I</original>
    <variation>N</variation>
    <location>
        <position position="373"/>
    </location>
</feature>
<feature type="sequence conflict" description="In Ref. 1; AAB66898." evidence="7" ref="1">
    <original>L</original>
    <variation>M</variation>
    <location>
        <position position="498"/>
    </location>
</feature>
<feature type="sequence conflict" description="In Ref. 1; AAB66898." evidence="7" ref="1">
    <original>Q</original>
    <variation>H</variation>
    <location>
        <position position="545"/>
    </location>
</feature>
<feature type="sequence conflict" description="In Ref. 1; AAB66898." evidence="7" ref="1">
    <original>EREG</original>
    <variation>QKER</variation>
    <location>
        <begin position="576"/>
        <end position="579"/>
    </location>
</feature>
<reference key="1">
    <citation type="submission" date="1997-07" db="EMBL/GenBank/DDBJ databases">
        <title>MPTP-MEG2.</title>
        <authorList>
            <person name="Meng K."/>
            <person name="Gu M."/>
            <person name="Li F.N."/>
            <person name="Veile R.A."/>
            <person name="Donis-Keller H."/>
            <person name="Majerus P.W."/>
        </authorList>
    </citation>
    <scope>NUCLEOTIDE SEQUENCE [MRNA]</scope>
</reference>
<reference key="2">
    <citation type="journal article" date="2004" name="Genome Res.">
        <title>The status, quality, and expansion of the NIH full-length cDNA project: the Mammalian Gene Collection (MGC).</title>
        <authorList>
            <consortium name="The MGC Project Team"/>
        </authorList>
    </citation>
    <scope>NUCLEOTIDE SEQUENCE [LARGE SCALE MRNA]</scope>
    <source>
        <strain>C57BL/6J</strain>
        <tissue>Brain</tissue>
    </source>
</reference>
<reference key="3">
    <citation type="journal article" date="2010" name="Cell">
        <title>A tissue-specific atlas of mouse protein phosphorylation and expression.</title>
        <authorList>
            <person name="Huttlin E.L."/>
            <person name="Jedrychowski M.P."/>
            <person name="Elias J.E."/>
            <person name="Goswami T."/>
            <person name="Rad R."/>
            <person name="Beausoleil S.A."/>
            <person name="Villen J."/>
            <person name="Haas W."/>
            <person name="Sowa M.E."/>
            <person name="Gygi S.P."/>
        </authorList>
    </citation>
    <scope>IDENTIFICATION BY MASS SPECTROMETRY [LARGE SCALE ANALYSIS]</scope>
    <source>
        <tissue>Brain</tissue>
        <tissue>Liver</tissue>
        <tissue>Lung</tissue>
        <tissue>Pancreas</tissue>
        <tissue>Testis</tissue>
    </source>
</reference>
<dbReference type="EC" id="3.1.3.48"/>
<dbReference type="EMBL" id="AF013490">
    <property type="protein sequence ID" value="AAB66898.1"/>
    <property type="molecule type" value="mRNA"/>
</dbReference>
<dbReference type="EMBL" id="BC053017">
    <property type="protein sequence ID" value="AAH53017.1"/>
    <property type="molecule type" value="mRNA"/>
</dbReference>
<dbReference type="CCDS" id="CCDS23215.1"/>
<dbReference type="RefSeq" id="NP_062625.2">
    <property type="nucleotide sequence ID" value="NM_019651.2"/>
</dbReference>
<dbReference type="SMR" id="O35239"/>
<dbReference type="BioGRID" id="207882">
    <property type="interactions" value="1"/>
</dbReference>
<dbReference type="FunCoup" id="O35239">
    <property type="interactions" value="2445"/>
</dbReference>
<dbReference type="IntAct" id="O35239">
    <property type="interactions" value="2"/>
</dbReference>
<dbReference type="MINT" id="O35239"/>
<dbReference type="STRING" id="10090.ENSMUSP00000034832"/>
<dbReference type="iPTMnet" id="O35239"/>
<dbReference type="PhosphoSitePlus" id="O35239"/>
<dbReference type="SwissPalm" id="O35239"/>
<dbReference type="PaxDb" id="10090-ENSMUSP00000034832"/>
<dbReference type="PeptideAtlas" id="O35239"/>
<dbReference type="ProteomicsDB" id="301942"/>
<dbReference type="Pumba" id="O35239"/>
<dbReference type="Antibodypedia" id="27331">
    <property type="antibodies" value="123 antibodies from 29 providers"/>
</dbReference>
<dbReference type="DNASU" id="56294"/>
<dbReference type="Ensembl" id="ENSMUST00000034832.8">
    <property type="protein sequence ID" value="ENSMUSP00000034832.7"/>
    <property type="gene ID" value="ENSMUSG00000032290.8"/>
</dbReference>
<dbReference type="GeneID" id="56294"/>
<dbReference type="KEGG" id="mmu:56294"/>
<dbReference type="UCSC" id="uc009ptt.1">
    <property type="organism name" value="mouse"/>
</dbReference>
<dbReference type="AGR" id="MGI:1928376"/>
<dbReference type="CTD" id="5780"/>
<dbReference type="MGI" id="MGI:1928376">
    <property type="gene designation" value="Ptpn9"/>
</dbReference>
<dbReference type="VEuPathDB" id="HostDB:ENSMUSG00000032290"/>
<dbReference type="eggNOG" id="ENOG502QR81">
    <property type="taxonomic scope" value="Eukaryota"/>
</dbReference>
<dbReference type="GeneTree" id="ENSGT00940000157447"/>
<dbReference type="HOGENOM" id="CLU_016977_1_0_1"/>
<dbReference type="InParanoid" id="O35239"/>
<dbReference type="OMA" id="DLASWNF"/>
<dbReference type="OrthoDB" id="10051650at2759"/>
<dbReference type="PhylomeDB" id="O35239"/>
<dbReference type="TreeFam" id="TF351975"/>
<dbReference type="BioGRID-ORCS" id="56294">
    <property type="hits" value="2 hits in 79 CRISPR screens"/>
</dbReference>
<dbReference type="ChiTaRS" id="Ptpn9">
    <property type="organism name" value="mouse"/>
</dbReference>
<dbReference type="PRO" id="PR:O35239"/>
<dbReference type="Proteomes" id="UP000000589">
    <property type="component" value="Chromosome 9"/>
</dbReference>
<dbReference type="RNAct" id="O35239">
    <property type="molecule type" value="protein"/>
</dbReference>
<dbReference type="Bgee" id="ENSMUSG00000032290">
    <property type="expression patterns" value="Expressed in entorhinal cortex and 250 other cell types or tissues"/>
</dbReference>
<dbReference type="ExpressionAtlas" id="O35239">
    <property type="expression patterns" value="baseline and differential"/>
</dbReference>
<dbReference type="GO" id="GO:0005737">
    <property type="term" value="C:cytoplasm"/>
    <property type="evidence" value="ECO:0007669"/>
    <property type="project" value="UniProtKB-SubCell"/>
</dbReference>
<dbReference type="GO" id="GO:0044306">
    <property type="term" value="C:neuron projection terminus"/>
    <property type="evidence" value="ECO:0000314"/>
    <property type="project" value="MGI"/>
</dbReference>
<dbReference type="GO" id="GO:0004725">
    <property type="term" value="F:protein tyrosine phosphatase activity"/>
    <property type="evidence" value="ECO:0000250"/>
    <property type="project" value="UniProtKB"/>
</dbReference>
<dbReference type="GO" id="GO:0010977">
    <property type="term" value="P:negative regulation of neuron projection development"/>
    <property type="evidence" value="ECO:0000266"/>
    <property type="project" value="MGI"/>
</dbReference>
<dbReference type="GO" id="GO:1903078">
    <property type="term" value="P:positive regulation of protein localization to plasma membrane"/>
    <property type="evidence" value="ECO:0000266"/>
    <property type="project" value="MGI"/>
</dbReference>
<dbReference type="CDD" id="cd14543">
    <property type="entry name" value="PTPc-N9"/>
    <property type="match status" value="1"/>
</dbReference>
<dbReference type="CDD" id="cd00170">
    <property type="entry name" value="SEC14"/>
    <property type="match status" value="1"/>
</dbReference>
<dbReference type="FunFam" id="3.40.525.10:FF:000005">
    <property type="entry name" value="Tyrosine-protein phosphatase non-receptor type 9"/>
    <property type="match status" value="1"/>
</dbReference>
<dbReference type="FunFam" id="3.90.190.10:FF:000026">
    <property type="entry name" value="tyrosine-protein phosphatase non-receptor type 9"/>
    <property type="match status" value="1"/>
</dbReference>
<dbReference type="Gene3D" id="3.40.525.10">
    <property type="entry name" value="CRAL-TRIO lipid binding domain"/>
    <property type="match status" value="1"/>
</dbReference>
<dbReference type="Gene3D" id="1.10.8.20">
    <property type="entry name" value="N-terminal domain of phosphatidylinositol transfer protein sec14p"/>
    <property type="match status" value="1"/>
</dbReference>
<dbReference type="Gene3D" id="3.90.190.10">
    <property type="entry name" value="Protein tyrosine phosphatase superfamily"/>
    <property type="match status" value="1"/>
</dbReference>
<dbReference type="InterPro" id="IPR001251">
    <property type="entry name" value="CRAL-TRIO_dom"/>
</dbReference>
<dbReference type="InterPro" id="IPR036865">
    <property type="entry name" value="CRAL-TRIO_dom_sf"/>
</dbReference>
<dbReference type="InterPro" id="IPR036273">
    <property type="entry name" value="CRAL/TRIO_N_dom_sf"/>
</dbReference>
<dbReference type="InterPro" id="IPR029021">
    <property type="entry name" value="Prot-tyrosine_phosphatase-like"/>
</dbReference>
<dbReference type="InterPro" id="IPR050348">
    <property type="entry name" value="Protein-Tyr_Phosphatase"/>
</dbReference>
<dbReference type="InterPro" id="IPR000242">
    <property type="entry name" value="PTP_cat"/>
</dbReference>
<dbReference type="InterPro" id="IPR016130">
    <property type="entry name" value="Tyr_Pase_AS"/>
</dbReference>
<dbReference type="InterPro" id="IPR003595">
    <property type="entry name" value="Tyr_Pase_cat"/>
</dbReference>
<dbReference type="InterPro" id="IPR000387">
    <property type="entry name" value="Tyr_Pase_dom"/>
</dbReference>
<dbReference type="PANTHER" id="PTHR19134">
    <property type="entry name" value="RECEPTOR-TYPE TYROSINE-PROTEIN PHOSPHATASE"/>
    <property type="match status" value="1"/>
</dbReference>
<dbReference type="PANTHER" id="PTHR19134:SF285">
    <property type="entry name" value="TYROSINE-PROTEIN PHOSPHATASE NON-RECEPTOR TYPE 9"/>
    <property type="match status" value="1"/>
</dbReference>
<dbReference type="Pfam" id="PF00650">
    <property type="entry name" value="CRAL_TRIO"/>
    <property type="match status" value="1"/>
</dbReference>
<dbReference type="Pfam" id="PF00102">
    <property type="entry name" value="Y_phosphatase"/>
    <property type="match status" value="1"/>
</dbReference>
<dbReference type="PRINTS" id="PR00700">
    <property type="entry name" value="PRTYPHPHTASE"/>
</dbReference>
<dbReference type="SMART" id="SM00194">
    <property type="entry name" value="PTPc"/>
    <property type="match status" value="1"/>
</dbReference>
<dbReference type="SMART" id="SM00404">
    <property type="entry name" value="PTPc_motif"/>
    <property type="match status" value="1"/>
</dbReference>
<dbReference type="SMART" id="SM00516">
    <property type="entry name" value="SEC14"/>
    <property type="match status" value="1"/>
</dbReference>
<dbReference type="SUPFAM" id="SSF52799">
    <property type="entry name" value="(Phosphotyrosine protein) phosphatases II"/>
    <property type="match status" value="1"/>
</dbReference>
<dbReference type="SUPFAM" id="SSF52087">
    <property type="entry name" value="CRAL/TRIO domain"/>
    <property type="match status" value="1"/>
</dbReference>
<dbReference type="SUPFAM" id="SSF46938">
    <property type="entry name" value="CRAL/TRIO N-terminal domain"/>
    <property type="match status" value="1"/>
</dbReference>
<dbReference type="PROSITE" id="PS50191">
    <property type="entry name" value="CRAL_TRIO"/>
    <property type="match status" value="1"/>
</dbReference>
<dbReference type="PROSITE" id="PS00383">
    <property type="entry name" value="TYR_PHOSPHATASE_1"/>
    <property type="match status" value="1"/>
</dbReference>
<dbReference type="PROSITE" id="PS50056">
    <property type="entry name" value="TYR_PHOSPHATASE_2"/>
    <property type="match status" value="1"/>
</dbReference>
<dbReference type="PROSITE" id="PS50055">
    <property type="entry name" value="TYR_PHOSPHATASE_PTP"/>
    <property type="match status" value="1"/>
</dbReference>
<evidence type="ECO:0000250" key="1"/>
<evidence type="ECO:0000250" key="2">
    <source>
        <dbReference type="UniProtKB" id="P43378"/>
    </source>
</evidence>
<evidence type="ECO:0000255" key="3">
    <source>
        <dbReference type="PROSITE-ProRule" id="PRU00056"/>
    </source>
</evidence>
<evidence type="ECO:0000255" key="4">
    <source>
        <dbReference type="PROSITE-ProRule" id="PRU00160"/>
    </source>
</evidence>
<evidence type="ECO:0000255" key="5">
    <source>
        <dbReference type="PROSITE-ProRule" id="PRU10044"/>
    </source>
</evidence>
<evidence type="ECO:0000256" key="6">
    <source>
        <dbReference type="SAM" id="MobiDB-lite"/>
    </source>
</evidence>
<evidence type="ECO:0000305" key="7"/>
<organism>
    <name type="scientific">Mus musculus</name>
    <name type="common">Mouse</name>
    <dbReference type="NCBI Taxonomy" id="10090"/>
    <lineage>
        <taxon>Eukaryota</taxon>
        <taxon>Metazoa</taxon>
        <taxon>Chordata</taxon>
        <taxon>Craniata</taxon>
        <taxon>Vertebrata</taxon>
        <taxon>Euteleostomi</taxon>
        <taxon>Mammalia</taxon>
        <taxon>Eutheria</taxon>
        <taxon>Euarchontoglires</taxon>
        <taxon>Glires</taxon>
        <taxon>Rodentia</taxon>
        <taxon>Myomorpha</taxon>
        <taxon>Muroidea</taxon>
        <taxon>Muridae</taxon>
        <taxon>Murinae</taxon>
        <taxon>Mus</taxon>
        <taxon>Mus</taxon>
    </lineage>
</organism>
<accession>O35239</accession>
<accession>Q7TSK0</accession>
<comment type="function">
    <text evidence="1">Protein-tyrosine phosphatase that could participate in the transfer of hydrophobic ligands or in functions of the Golgi apparatus.</text>
</comment>
<comment type="catalytic activity">
    <reaction evidence="5">
        <text>O-phospho-L-tyrosyl-[protein] + H2O = L-tyrosyl-[protein] + phosphate</text>
        <dbReference type="Rhea" id="RHEA:10684"/>
        <dbReference type="Rhea" id="RHEA-COMP:10136"/>
        <dbReference type="Rhea" id="RHEA-COMP:20101"/>
        <dbReference type="ChEBI" id="CHEBI:15377"/>
        <dbReference type="ChEBI" id="CHEBI:43474"/>
        <dbReference type="ChEBI" id="CHEBI:46858"/>
        <dbReference type="ChEBI" id="CHEBI:61978"/>
        <dbReference type="EC" id="3.1.3.48"/>
    </reaction>
</comment>
<comment type="interaction">
    <interactant intactId="EBI-7297868">
        <id>O35239</id>
    </interactant>
    <interactant intactId="EBI-398006">
        <id>P46460</id>
        <label>Nsf</label>
    </interactant>
    <organismsDiffer>false</organismsDiffer>
    <experiments>2</experiments>
</comment>
<comment type="subcellular location">
    <subcellularLocation>
        <location evidence="7">Cytoplasm</location>
    </subcellularLocation>
</comment>
<comment type="similarity">
    <text evidence="7">Belongs to the protein-tyrosine phosphatase family. Non-receptor class 3 subfamily.</text>
</comment>
<sequence length="593" mass="67970">MEPATAPRPDMAPELTPEEEQATKQFLEEINKWTVQYNVSPLSWNVAVKFLMARKFDVLRAVELFHCYRETRRKEGIVKLKPHEEPLRSEILSGKFTILNVRDPTGASIALFTARLHHPHKSAQHVVLQALFYLLDRAVDSFETQRNGLVFIYDMCGSNYANFELDLGKKVLNLLKGAFPARLKKVLIVGAPIWFRVPYSIISLLLKDKVRERIQILKTSEVTQHLPRECLPENLGGYVKIDLATWNFQFLPQVNGHPDPFDEIILSSLPPALDWDSVHVPGPHAMTIQELVDYVNTRQKRGIYEEYEDIRRENPVGTFHCSMSPGNLEKNRYGDVPCLDQTRVKLTKRSGHTQTDYINASFMDGYKQKNAYIGTQGPLENTYRDFWLMVWEQKVLVIVMTTRFEEGGRRKCGQYWPLEKDSRIRFGFLTVTNLGVENMNHYKKTTLEIHNTEERQKRQVTHFQFLSWPDYGVPSSAASLIDFLRVVRNQQSMAVGNLGARSKGQCPEPPIVVHCSAGIGRTGTFCSLDICLAQLEELGTLNVFQTVSRMRTQRAFSIQTPEQYYFCYKAILEFAEREGMVPSGHSLLAMDGQ</sequence>